<sequence length="548" mass="60026">MGFEELLEQVGGFGPFQLRNVALLALPRVLLPLHFLLPIFLAAVPAHRCALPGAPANFSHQDVWLEAHLPREPDGTLSSCLRFAYPQALPNTTLGEERQSRGELEDEPATVPCSQGWEYDHSEFSSTIATESQWDLVCEQKGLNRAASTFFFAGVLVGAVAFGYLSDRFGRRRLLLVAYVSTLVLGLASAASVSYVMFAITRTLTGSALAGFTIIVMPLELEWLDVEHRTVAGVLSSTFWTGGVMLLALVGYLIRDWRWLLLAVTLPCAPGILSLWWVPESARWLLTQGHVKEAHRYLLHCARLNGRPVCEDSFSQEAVSKVAAGERVVRRPSYLDLFRTPRLRHISLCCVVVWFGVNFSYYGLSLDVSGLGLNVYQTQLLFGAVELPSKLLVYLSVRYAGRRLTQAGTLLGTALAFGTRLLVSSDMKSWSTVLAVMGKAFSEAAFTTAYLFTSELYPTVLRQTGMGLTALVGRLGGSLAPLAALLDGVWLSLPKLTYGGIALLAAGTALLLPETRQAQLPETIQDVERKSAPTSLQEEEMPMKQVQN</sequence>
<gene>
    <name evidence="27" type="primary">SLC22A7</name>
    <name type="synonym">NLT</name>
    <name type="synonym">OAT2</name>
</gene>
<feature type="chain" id="PRO_0000317481" description="Solute carrier family 22 member 7">
    <location>
        <begin position="1"/>
        <end position="548"/>
    </location>
</feature>
<feature type="transmembrane region" description="Helical" evidence="2">
    <location>
        <begin position="21"/>
        <end position="41"/>
    </location>
</feature>
<feature type="transmembrane region" description="Helical" evidence="2">
    <location>
        <begin position="146"/>
        <end position="166"/>
    </location>
</feature>
<feature type="transmembrane region" description="Helical" evidence="2">
    <location>
        <begin position="180"/>
        <end position="200"/>
    </location>
</feature>
<feature type="transmembrane region" description="Helical" evidence="2">
    <location>
        <begin position="204"/>
        <end position="224"/>
    </location>
</feature>
<feature type="transmembrane region" description="Helical" evidence="2">
    <location>
        <begin position="234"/>
        <end position="254"/>
    </location>
</feature>
<feature type="transmembrane region" description="Helical" evidence="2">
    <location>
        <begin position="259"/>
        <end position="279"/>
    </location>
</feature>
<feature type="transmembrane region" description="Helical" evidence="2">
    <location>
        <begin position="346"/>
        <end position="366"/>
    </location>
</feature>
<feature type="transmembrane region" description="Helical" evidence="2">
    <location>
        <begin position="376"/>
        <end position="397"/>
    </location>
</feature>
<feature type="transmembrane region" description="Helical" evidence="2">
    <location>
        <begin position="404"/>
        <end position="423"/>
    </location>
</feature>
<feature type="transmembrane region" description="Helical" evidence="2">
    <location>
        <begin position="432"/>
        <end position="452"/>
    </location>
</feature>
<feature type="transmembrane region" description="Helical" evidence="2">
    <location>
        <begin position="466"/>
        <end position="486"/>
    </location>
</feature>
<feature type="transmembrane region" description="Helical" evidence="2">
    <location>
        <begin position="493"/>
        <end position="513"/>
    </location>
</feature>
<feature type="region of interest" description="Disordered" evidence="3">
    <location>
        <begin position="522"/>
        <end position="548"/>
    </location>
</feature>
<feature type="glycosylation site" description="N-linked (GlcNAc...) asparagine" evidence="8">
    <location>
        <position position="91"/>
    </location>
</feature>
<feature type="splice variant" id="VSP_030991" description="In isoform 4." evidence="23">
    <location>
        <begin position="1"/>
        <end position="307"/>
    </location>
</feature>
<feature type="splice variant" id="VSP_030992" description="In isoform 2 and isoform 3." evidence="16 22">
    <location>
        <begin position="132"/>
        <end position="133"/>
    </location>
</feature>
<feature type="splice variant" id="VSP_030993" description="In isoform 4." evidence="23">
    <original>PVCEDSFSQE</original>
    <variation>MLQPHLLPYQ</variation>
    <location>
        <begin position="308"/>
        <end position="317"/>
    </location>
</feature>
<feature type="splice variant" id="VSP_030994" description="In isoform 3." evidence="16 22">
    <original>SAPTSLQEEEMPMKQVQN</original>
    <variation>RCVHRTVSVYV</variation>
    <location>
        <begin position="531"/>
        <end position="548"/>
    </location>
</feature>
<feature type="sequence variant" id="VAR_047875" description="In dbSNP:rs70953684." evidence="14">
    <original>R</original>
    <variation>K</variation>
    <location>
        <position position="303"/>
    </location>
</feature>
<feature type="sequence variant" id="VAR_047876" description="In dbSNP:rs36040909." evidence="14">
    <original>R</original>
    <variation>W</variation>
    <location>
        <position position="327"/>
    </location>
</feature>
<feature type="sequence variant" id="VAR_047877" description="In dbSNP:rs70953693." evidence="14">
    <original>G</original>
    <variation>V</variation>
    <location>
        <position position="507"/>
    </location>
</feature>
<feature type="sequence conflict" description="In Ref. 2; AAG43523." evidence="23" ref="2">
    <original>L</original>
    <variation>P</variation>
    <location>
        <position position="304"/>
    </location>
</feature>
<feature type="sequence conflict" description="In Ref. 2; AAG43523." evidence="23" ref="2">
    <original>T</original>
    <variation>A</variation>
    <location>
        <position position="413"/>
    </location>
</feature>
<feature type="active site" description="Important for glutamate counteranion efflux" evidence="9">
    <location sequence="Q9Y694-2">
        <position position="441"/>
    </location>
</feature>
<feature type="mutagenesis site" description="Loss of glutamate transport activity; strong decrease in orotate transport activity." evidence="9">
    <original>E</original>
    <variation>Q</variation>
    <location sequence="Q9Y694-2">
        <position position="441"/>
    </location>
</feature>
<evidence type="ECO:0000250" key="1">
    <source>
        <dbReference type="UniProtKB" id="Q91WU2"/>
    </source>
</evidence>
<evidence type="ECO:0000255" key="2"/>
<evidence type="ECO:0000256" key="3">
    <source>
        <dbReference type="SAM" id="MobiDB-lite"/>
    </source>
</evidence>
<evidence type="ECO:0000269" key="4">
    <source>
    </source>
</evidence>
<evidence type="ECO:0000269" key="5">
    <source>
    </source>
</evidence>
<evidence type="ECO:0000269" key="6">
    <source>
    </source>
</evidence>
<evidence type="ECO:0000269" key="7">
    <source>
    </source>
</evidence>
<evidence type="ECO:0000269" key="8">
    <source>
    </source>
</evidence>
<evidence type="ECO:0000269" key="9">
    <source>
    </source>
</evidence>
<evidence type="ECO:0000269" key="10">
    <source>
    </source>
</evidence>
<evidence type="ECO:0000269" key="11">
    <source>
    </source>
</evidence>
<evidence type="ECO:0000269" key="12">
    <source>
    </source>
</evidence>
<evidence type="ECO:0000269" key="13">
    <source>
    </source>
</evidence>
<evidence type="ECO:0000269" key="14">
    <source ref="5"/>
</evidence>
<evidence type="ECO:0000303" key="15">
    <source>
    </source>
</evidence>
<evidence type="ECO:0000303" key="16">
    <source>
    </source>
</evidence>
<evidence type="ECO:0000303" key="17">
    <source>
    </source>
</evidence>
<evidence type="ECO:0000303" key="18">
    <source>
    </source>
</evidence>
<evidence type="ECO:0000303" key="19">
    <source>
    </source>
</evidence>
<evidence type="ECO:0000303" key="20">
    <source>
    </source>
</evidence>
<evidence type="ECO:0000303" key="21">
    <source ref="1"/>
</evidence>
<evidence type="ECO:0000303" key="22">
    <source ref="2"/>
</evidence>
<evidence type="ECO:0000305" key="23"/>
<evidence type="ECO:0000305" key="24">
    <source>
    </source>
</evidence>
<evidence type="ECO:0000305" key="25">
    <source>
    </source>
</evidence>
<evidence type="ECO:0000305" key="26">
    <source>
    </source>
</evidence>
<evidence type="ECO:0000312" key="27">
    <source>
        <dbReference type="HGNC" id="HGNC:10971"/>
    </source>
</evidence>
<name>S22A7_HUMAN</name>
<accession>Q9Y694</accession>
<accession>B2CZX6</accession>
<accession>Q5T046</accession>
<accession>Q5T048</accession>
<accession>Q5T050</accession>
<accession>Q9H2W5</accession>
<reference key="1">
    <citation type="submission" date="1998-10" db="EMBL/GenBank/DDBJ databases">
        <title>Molecular cloning of a human liver-specific transporter, NLT.</title>
        <authorList>
            <person name="Kim R.B."/>
            <person name="Leake B.L."/>
            <person name="Cvetkovic M."/>
        </authorList>
    </citation>
    <scope>NUCLEOTIDE SEQUENCE [MRNA] (ISOFORM 1)</scope>
    <source>
        <tissue>Liver</tissue>
    </source>
</reference>
<reference key="2">
    <citation type="submission" date="1999-12" db="EMBL/GenBank/DDBJ databases">
        <title>Identification of a human organic anion transporter 2 homolog.</title>
        <authorList>
            <person name="Reid G."/>
            <person name="Bahn A."/>
            <person name="Ebbinghaus C."/>
            <person name="Wolff N.A."/>
            <person name="Burckhardt G."/>
        </authorList>
    </citation>
    <scope>NUCLEOTIDE SEQUENCE [MRNA] (ISOFORM 3)</scope>
    <source>
        <tissue>Kidney</tissue>
    </source>
</reference>
<reference key="3">
    <citation type="submission" date="2001-08" db="EMBL/GenBank/DDBJ databases">
        <title>Cloning, characterization and localization of human organic anion transporter 2.</title>
        <authorList>
            <person name="Kobayashi Y."/>
            <person name="Ohshiro N."/>
            <person name="Sekine T."/>
            <person name="Endoh H."/>
            <person name="Yamamoto T."/>
        </authorList>
    </citation>
    <scope>NUCLEOTIDE SEQUENCE [MRNA] (ISOFORM 1)</scope>
</reference>
<reference key="4">
    <citation type="journal article" date="2004" name="Nat. Genet.">
        <title>Complete sequencing and characterization of 21,243 full-length human cDNAs.</title>
        <authorList>
            <person name="Ota T."/>
            <person name="Suzuki Y."/>
            <person name="Nishikawa T."/>
            <person name="Otsuki T."/>
            <person name="Sugiyama T."/>
            <person name="Irie R."/>
            <person name="Wakamatsu A."/>
            <person name="Hayashi K."/>
            <person name="Sato H."/>
            <person name="Nagai K."/>
            <person name="Kimura K."/>
            <person name="Makita H."/>
            <person name="Sekine M."/>
            <person name="Obayashi M."/>
            <person name="Nishi T."/>
            <person name="Shibahara T."/>
            <person name="Tanaka T."/>
            <person name="Ishii S."/>
            <person name="Yamamoto J."/>
            <person name="Saito K."/>
            <person name="Kawai Y."/>
            <person name="Isono Y."/>
            <person name="Nakamura Y."/>
            <person name="Nagahari K."/>
            <person name="Murakami K."/>
            <person name="Yasuda T."/>
            <person name="Iwayanagi T."/>
            <person name="Wagatsuma M."/>
            <person name="Shiratori A."/>
            <person name="Sudo H."/>
            <person name="Hosoiri T."/>
            <person name="Kaku Y."/>
            <person name="Kodaira H."/>
            <person name="Kondo H."/>
            <person name="Sugawara M."/>
            <person name="Takahashi M."/>
            <person name="Kanda K."/>
            <person name="Yokoi T."/>
            <person name="Furuya T."/>
            <person name="Kikkawa E."/>
            <person name="Omura Y."/>
            <person name="Abe K."/>
            <person name="Kamihara K."/>
            <person name="Katsuta N."/>
            <person name="Sato K."/>
            <person name="Tanikawa M."/>
            <person name="Yamazaki M."/>
            <person name="Ninomiya K."/>
            <person name="Ishibashi T."/>
            <person name="Yamashita H."/>
            <person name="Murakawa K."/>
            <person name="Fujimori K."/>
            <person name="Tanai H."/>
            <person name="Kimata M."/>
            <person name="Watanabe M."/>
            <person name="Hiraoka S."/>
            <person name="Chiba Y."/>
            <person name="Ishida S."/>
            <person name="Ono Y."/>
            <person name="Takiguchi S."/>
            <person name="Watanabe S."/>
            <person name="Yosida M."/>
            <person name="Hotuta T."/>
            <person name="Kusano J."/>
            <person name="Kanehori K."/>
            <person name="Takahashi-Fujii A."/>
            <person name="Hara H."/>
            <person name="Tanase T.-O."/>
            <person name="Nomura Y."/>
            <person name="Togiya S."/>
            <person name="Komai F."/>
            <person name="Hara R."/>
            <person name="Takeuchi K."/>
            <person name="Arita M."/>
            <person name="Imose N."/>
            <person name="Musashino K."/>
            <person name="Yuuki H."/>
            <person name="Oshima A."/>
            <person name="Sasaki N."/>
            <person name="Aotsuka S."/>
            <person name="Yoshikawa Y."/>
            <person name="Matsunawa H."/>
            <person name="Ichihara T."/>
            <person name="Shiohata N."/>
            <person name="Sano S."/>
            <person name="Moriya S."/>
            <person name="Momiyama H."/>
            <person name="Satoh N."/>
            <person name="Takami S."/>
            <person name="Terashima Y."/>
            <person name="Suzuki O."/>
            <person name="Nakagawa S."/>
            <person name="Senoh A."/>
            <person name="Mizoguchi H."/>
            <person name="Goto Y."/>
            <person name="Shimizu F."/>
            <person name="Wakebe H."/>
            <person name="Hishigaki H."/>
            <person name="Watanabe T."/>
            <person name="Sugiyama A."/>
            <person name="Takemoto M."/>
            <person name="Kawakami B."/>
            <person name="Yamazaki M."/>
            <person name="Watanabe K."/>
            <person name="Kumagai A."/>
            <person name="Itakura S."/>
            <person name="Fukuzumi Y."/>
            <person name="Fujimori Y."/>
            <person name="Komiyama M."/>
            <person name="Tashiro H."/>
            <person name="Tanigami A."/>
            <person name="Fujiwara T."/>
            <person name="Ono T."/>
            <person name="Yamada K."/>
            <person name="Fujii Y."/>
            <person name="Ozaki K."/>
            <person name="Hirao M."/>
            <person name="Ohmori Y."/>
            <person name="Kawabata A."/>
            <person name="Hikiji T."/>
            <person name="Kobatake N."/>
            <person name="Inagaki H."/>
            <person name="Ikema Y."/>
            <person name="Okamoto S."/>
            <person name="Okitani R."/>
            <person name="Kawakami T."/>
            <person name="Noguchi S."/>
            <person name="Itoh T."/>
            <person name="Shigeta K."/>
            <person name="Senba T."/>
            <person name="Matsumura K."/>
            <person name="Nakajima Y."/>
            <person name="Mizuno T."/>
            <person name="Morinaga M."/>
            <person name="Sasaki M."/>
            <person name="Togashi T."/>
            <person name="Oyama M."/>
            <person name="Hata H."/>
            <person name="Watanabe M."/>
            <person name="Komatsu T."/>
            <person name="Mizushima-Sugano J."/>
            <person name="Satoh T."/>
            <person name="Shirai Y."/>
            <person name="Takahashi Y."/>
            <person name="Nakagawa K."/>
            <person name="Okumura K."/>
            <person name="Nagase T."/>
            <person name="Nomura N."/>
            <person name="Kikuchi H."/>
            <person name="Masuho Y."/>
            <person name="Yamashita R."/>
            <person name="Nakai K."/>
            <person name="Yada T."/>
            <person name="Nakamura Y."/>
            <person name="Ohara O."/>
            <person name="Isogai T."/>
            <person name="Sugano S."/>
        </authorList>
    </citation>
    <scope>NUCLEOTIDE SEQUENCE [LARGE SCALE MRNA] (ISOFORMS 2 AND 3)</scope>
    <source>
        <tissue>Kidney</tissue>
    </source>
</reference>
<reference key="5">
    <citation type="submission" date="2008-03" db="EMBL/GenBank/DDBJ databases">
        <authorList>
            <consortium name="NIEHS SNPs program"/>
        </authorList>
    </citation>
    <scope>NUCLEOTIDE SEQUENCE [GENOMIC DNA]</scope>
    <scope>VARIANTS LYS-303; TRP-327 AND VAL-507</scope>
</reference>
<reference key="6">
    <citation type="journal article" date="2003" name="Nature">
        <title>The DNA sequence and analysis of human chromosome 6.</title>
        <authorList>
            <person name="Mungall A.J."/>
            <person name="Palmer S.A."/>
            <person name="Sims S.K."/>
            <person name="Edwards C.A."/>
            <person name="Ashurst J.L."/>
            <person name="Wilming L."/>
            <person name="Jones M.C."/>
            <person name="Horton R."/>
            <person name="Hunt S.E."/>
            <person name="Scott C.E."/>
            <person name="Gilbert J.G.R."/>
            <person name="Clamp M.E."/>
            <person name="Bethel G."/>
            <person name="Milne S."/>
            <person name="Ainscough R."/>
            <person name="Almeida J.P."/>
            <person name="Ambrose K.D."/>
            <person name="Andrews T.D."/>
            <person name="Ashwell R.I.S."/>
            <person name="Babbage A.K."/>
            <person name="Bagguley C.L."/>
            <person name="Bailey J."/>
            <person name="Banerjee R."/>
            <person name="Barker D.J."/>
            <person name="Barlow K.F."/>
            <person name="Bates K."/>
            <person name="Beare D.M."/>
            <person name="Beasley H."/>
            <person name="Beasley O."/>
            <person name="Bird C.P."/>
            <person name="Blakey S.E."/>
            <person name="Bray-Allen S."/>
            <person name="Brook J."/>
            <person name="Brown A.J."/>
            <person name="Brown J.Y."/>
            <person name="Burford D.C."/>
            <person name="Burrill W."/>
            <person name="Burton J."/>
            <person name="Carder C."/>
            <person name="Carter N.P."/>
            <person name="Chapman J.C."/>
            <person name="Clark S.Y."/>
            <person name="Clark G."/>
            <person name="Clee C.M."/>
            <person name="Clegg S."/>
            <person name="Cobley V."/>
            <person name="Collier R.E."/>
            <person name="Collins J.E."/>
            <person name="Colman L.K."/>
            <person name="Corby N.R."/>
            <person name="Coville G.J."/>
            <person name="Culley K.M."/>
            <person name="Dhami P."/>
            <person name="Davies J."/>
            <person name="Dunn M."/>
            <person name="Earthrowl M.E."/>
            <person name="Ellington A.E."/>
            <person name="Evans K.A."/>
            <person name="Faulkner L."/>
            <person name="Francis M.D."/>
            <person name="Frankish A."/>
            <person name="Frankland J."/>
            <person name="French L."/>
            <person name="Garner P."/>
            <person name="Garnett J."/>
            <person name="Ghori M.J."/>
            <person name="Gilby L.M."/>
            <person name="Gillson C.J."/>
            <person name="Glithero R.J."/>
            <person name="Grafham D.V."/>
            <person name="Grant M."/>
            <person name="Gribble S."/>
            <person name="Griffiths C."/>
            <person name="Griffiths M.N.D."/>
            <person name="Hall R."/>
            <person name="Halls K.S."/>
            <person name="Hammond S."/>
            <person name="Harley J.L."/>
            <person name="Hart E.A."/>
            <person name="Heath P.D."/>
            <person name="Heathcott R."/>
            <person name="Holmes S.J."/>
            <person name="Howden P.J."/>
            <person name="Howe K.L."/>
            <person name="Howell G.R."/>
            <person name="Huckle E."/>
            <person name="Humphray S.J."/>
            <person name="Humphries M.D."/>
            <person name="Hunt A.R."/>
            <person name="Johnson C.M."/>
            <person name="Joy A.A."/>
            <person name="Kay M."/>
            <person name="Keenan S.J."/>
            <person name="Kimberley A.M."/>
            <person name="King A."/>
            <person name="Laird G.K."/>
            <person name="Langford C."/>
            <person name="Lawlor S."/>
            <person name="Leongamornlert D.A."/>
            <person name="Leversha M."/>
            <person name="Lloyd C.R."/>
            <person name="Lloyd D.M."/>
            <person name="Loveland J.E."/>
            <person name="Lovell J."/>
            <person name="Martin S."/>
            <person name="Mashreghi-Mohammadi M."/>
            <person name="Maslen G.L."/>
            <person name="Matthews L."/>
            <person name="McCann O.T."/>
            <person name="McLaren S.J."/>
            <person name="McLay K."/>
            <person name="McMurray A."/>
            <person name="Moore M.J.F."/>
            <person name="Mullikin J.C."/>
            <person name="Niblett D."/>
            <person name="Nickerson T."/>
            <person name="Novik K.L."/>
            <person name="Oliver K."/>
            <person name="Overton-Larty E.K."/>
            <person name="Parker A."/>
            <person name="Patel R."/>
            <person name="Pearce A.V."/>
            <person name="Peck A.I."/>
            <person name="Phillimore B.J.C.T."/>
            <person name="Phillips S."/>
            <person name="Plumb R.W."/>
            <person name="Porter K.M."/>
            <person name="Ramsey Y."/>
            <person name="Ranby S.A."/>
            <person name="Rice C.M."/>
            <person name="Ross M.T."/>
            <person name="Searle S.M."/>
            <person name="Sehra H.K."/>
            <person name="Sheridan E."/>
            <person name="Skuce C.D."/>
            <person name="Smith S."/>
            <person name="Smith M."/>
            <person name="Spraggon L."/>
            <person name="Squares S.L."/>
            <person name="Steward C.A."/>
            <person name="Sycamore N."/>
            <person name="Tamlyn-Hall G."/>
            <person name="Tester J."/>
            <person name="Theaker A.J."/>
            <person name="Thomas D.W."/>
            <person name="Thorpe A."/>
            <person name="Tracey A."/>
            <person name="Tromans A."/>
            <person name="Tubby B."/>
            <person name="Wall M."/>
            <person name="Wallis J.M."/>
            <person name="West A.P."/>
            <person name="White S.S."/>
            <person name="Whitehead S.L."/>
            <person name="Whittaker H."/>
            <person name="Wild A."/>
            <person name="Willey D.J."/>
            <person name="Wilmer T.E."/>
            <person name="Wood J.M."/>
            <person name="Wray P.W."/>
            <person name="Wyatt J.C."/>
            <person name="Young L."/>
            <person name="Younger R.M."/>
            <person name="Bentley D.R."/>
            <person name="Coulson A."/>
            <person name="Durbin R.M."/>
            <person name="Hubbard T."/>
            <person name="Sulston J.E."/>
            <person name="Dunham I."/>
            <person name="Rogers J."/>
            <person name="Beck S."/>
        </authorList>
    </citation>
    <scope>NUCLEOTIDE SEQUENCE [LARGE SCALE GENOMIC DNA]</scope>
</reference>
<reference key="7">
    <citation type="submission" date="2005-07" db="EMBL/GenBank/DDBJ databases">
        <authorList>
            <person name="Mural R.J."/>
            <person name="Istrail S."/>
            <person name="Sutton G.G."/>
            <person name="Florea L."/>
            <person name="Halpern A.L."/>
            <person name="Mobarry C.M."/>
            <person name="Lippert R."/>
            <person name="Walenz B."/>
            <person name="Shatkay H."/>
            <person name="Dew I."/>
            <person name="Miller J.R."/>
            <person name="Flanigan M.J."/>
            <person name="Edwards N.J."/>
            <person name="Bolanos R."/>
            <person name="Fasulo D."/>
            <person name="Halldorsson B.V."/>
            <person name="Hannenhalli S."/>
            <person name="Turner R."/>
            <person name="Yooseph S."/>
            <person name="Lu F."/>
            <person name="Nusskern D.R."/>
            <person name="Shue B.C."/>
            <person name="Zheng X.H."/>
            <person name="Zhong F."/>
            <person name="Delcher A.L."/>
            <person name="Huson D.H."/>
            <person name="Kravitz S.A."/>
            <person name="Mouchard L."/>
            <person name="Reinert K."/>
            <person name="Remington K.A."/>
            <person name="Clark A.G."/>
            <person name="Waterman M.S."/>
            <person name="Eichler E.E."/>
            <person name="Adams M.D."/>
            <person name="Hunkapiller M.W."/>
            <person name="Myers E.W."/>
            <person name="Venter J.C."/>
        </authorList>
    </citation>
    <scope>NUCLEOTIDE SEQUENCE [LARGE SCALE GENOMIC DNA]</scope>
</reference>
<reference key="8">
    <citation type="journal article" date="2004" name="Genome Res.">
        <title>The status, quality, and expansion of the NIH full-length cDNA project: the Mammalian Gene Collection (MGC).</title>
        <authorList>
            <consortium name="The MGC Project Team"/>
        </authorList>
    </citation>
    <scope>NUCLEOTIDE SEQUENCE [LARGE SCALE MRNA] (ISOFORM 1)</scope>
    <source>
        <tissue>Colon</tissue>
    </source>
</reference>
<reference key="9">
    <citation type="journal article" date="2001" name="Biochem. Biophys. Res. Commun.">
        <title>Isolation of a family of organic anion transporters from human liver and kidney.</title>
        <authorList>
            <person name="Sun W."/>
            <person name="Wu R.R."/>
            <person name="van Poelje P.D."/>
            <person name="Erion M.D."/>
        </authorList>
    </citation>
    <scope>FUNCTION</scope>
    <scope>TRANSPORTER ACTIVITY</scope>
    <scope>TISSUE SPECIFICITY</scope>
    <scope>CAUTION</scope>
</reference>
<reference key="10">
    <citation type="journal article" date="2002" name="J. Pharmacol. Exp. Ther.">
        <title>Interaction of human organic anion transporters 2 and 4 with organic anion transport inhibitors.</title>
        <authorList>
            <person name="Enomoto A."/>
            <person name="Takeda M."/>
            <person name="Shimoda M."/>
            <person name="Narikawa S."/>
            <person name="Kobayashi Y."/>
            <person name="Kobayashi Y."/>
            <person name="Yamamoto T."/>
            <person name="Sekine T."/>
            <person name="Cha S.H."/>
            <person name="Niwa T."/>
            <person name="Endou H."/>
        </authorList>
    </citation>
    <scope>FUNCTION</scope>
    <scope>TRANSPORTER ACTIVITY</scope>
    <scope>SUBCELLULAR LOCATION</scope>
</reference>
<reference key="11">
    <citation type="journal article" date="2002" name="J. Pharmacol. Exp. Ther.">
        <title>Human organic anion transporters and human organic cation transporters mediate renal transport of prostaglandins.</title>
        <authorList>
            <person name="Kimura H."/>
            <person name="Takeda M."/>
            <person name="Narikawa S."/>
            <person name="Enomoto A."/>
            <person name="Ichida K."/>
            <person name="Endou H."/>
        </authorList>
    </citation>
    <scope>FUNCTION</scope>
    <scope>TRANSPORTER ACTIVITY</scope>
    <scope>BIOPHYSICOCHEMICAL PROPERTIES</scope>
</reference>
<reference key="12">
    <citation type="journal article" date="2002" name="Jpn. J. Pharmacol.">
        <title>Human organic anion transporters mediate the transport of tetracycline.</title>
        <authorList>
            <person name="Babu E."/>
            <person name="Takeda M."/>
            <person name="Narikawa S."/>
            <person name="Kobayashi Y."/>
            <person name="Yamamoto T."/>
            <person name="Cha S.H."/>
            <person name="Sekine T."/>
            <person name="Sakthisekaran D."/>
            <person name="Endou H."/>
        </authorList>
    </citation>
    <scope>MISCELLANEOUS</scope>
</reference>
<reference key="13">
    <citation type="journal article" date="2005" name="J. Pharm. Pharmacol.">
        <title>Transport mechanism and substrate specificity of human organic anion transporter 2 (hOat2 [SLC22A7]).</title>
        <authorList>
            <person name="Kobayashi Y."/>
            <person name="Ohshiro N."/>
            <person name="Sakai R."/>
            <person name="Ohbayashi M."/>
            <person name="Kohyama N."/>
            <person name="Yamamoto T."/>
        </authorList>
    </citation>
    <scope>CAUTION</scope>
</reference>
<reference key="14">
    <citation type="journal article" date="2008" name="Mol. Pharmacol.">
        <title>Organic anion transporter 2 (SLC22A7) is a facilitative transporter of cGMP.</title>
        <authorList>
            <person name="Cropp C.D."/>
            <person name="Komori T."/>
            <person name="Shima J.E."/>
            <person name="Urban T.J."/>
            <person name="Yee S.W."/>
            <person name="More S.S."/>
            <person name="Giacomini K.M."/>
        </authorList>
    </citation>
    <scope>FUNCTION</scope>
    <scope>TRANSPORTER ACTIVITY</scope>
    <scope>BIOPHYSICOCHEMICAL PROPERTIES</scope>
    <scope>SUBCELLULAR LOCATION</scope>
    <scope>TISSUE SPECIFICITY</scope>
    <scope>CAUTION</scope>
</reference>
<reference key="15">
    <citation type="journal article" date="2009" name="J. Proteome Res.">
        <title>Glycoproteomics analysis of human liver tissue by combination of multiple enzyme digestion and hydrazide chemistry.</title>
        <authorList>
            <person name="Chen R."/>
            <person name="Jiang X."/>
            <person name="Sun D."/>
            <person name="Han G."/>
            <person name="Wang F."/>
            <person name="Ye M."/>
            <person name="Wang L."/>
            <person name="Zou H."/>
        </authorList>
    </citation>
    <scope>GLYCOSYLATION [LARGE SCALE ANALYSIS] AT ASN-91</scope>
    <source>
        <tissue>Liver</tissue>
    </source>
</reference>
<reference key="16">
    <citation type="journal article" date="2011" name="Biochem. J.">
        <title>OAT2 catalyses efflux of glutamate and uptake of orotic acid.</title>
        <authorList>
            <person name="Fork C."/>
            <person name="Bauer T."/>
            <person name="Golz S."/>
            <person name="Geerts A."/>
            <person name="Weiland J."/>
            <person name="Del Turco D."/>
            <person name="Schoemig E."/>
            <person name="Gruendemann D."/>
        </authorList>
    </citation>
    <scope>FUNCTION</scope>
    <scope>TRANSPORTER ACTIVITY</scope>
    <scope>MUTAGENESIS OF GLU-441 (ISOFORM 2)</scope>
</reference>
<reference key="17">
    <citation type="journal article" date="2015" name="Am. J. Physiol.">
        <title>Human organic anion transporter 2 is distinct from organic anion transporters 1 and 3 with respect to transport function.</title>
        <authorList>
            <person name="Henjakovic M."/>
            <person name="Hagos Y."/>
            <person name="Krick W."/>
            <person name="Burckhardt G."/>
            <person name="Burckhardt B.C."/>
        </authorList>
    </citation>
    <scope>FUNCTION</scope>
    <scope>TRANSPORTER ACTIVITY</scope>
    <scope>CAUTION</scope>
</reference>
<reference key="18">
    <citation type="journal article" date="2015" name="Drug Metab. Dispos.">
        <title>Characterization of Organic Anion Transporter 2 (SLC22A7): A Highly Efficient Transporter for Creatinine and Species-Dependent Renal Tubular Expression.</title>
        <authorList>
            <person name="Shen H."/>
            <person name="Liu T."/>
            <person name="Morse B.L."/>
            <person name="Zhao Y."/>
            <person name="Zhang Y."/>
            <person name="Qiu X."/>
            <person name="Chen C."/>
            <person name="Lewin A.C."/>
            <person name="Wang X.T."/>
            <person name="Liu G."/>
            <person name="Christopher L.J."/>
            <person name="Marathe P."/>
            <person name="Lai Y."/>
        </authorList>
    </citation>
    <scope>FUNCTION</scope>
    <scope>TRANSPORTER ACTIVITY</scope>
    <scope>BIOPHYSICOCHEMICAL PROPERTIES</scope>
    <scope>TISSUE SPECIFICITY</scope>
    <scope>SUBCELLULAR LOCATION</scope>
</reference>
<reference key="19">
    <citation type="journal article" date="2015" name="Front. Pharmacol.">
        <title>Organic anion transporter 2 transcript variant 1 shows broad ligand selectivity when expressed in multiple cell lines.</title>
        <authorList>
            <person name="Hotchkiss A.G."/>
            <person name="Berrigan L."/>
            <person name="Pelis R.M."/>
        </authorList>
    </citation>
    <scope>CAUTION</scope>
</reference>
<reference key="20">
    <citation type="journal article" date="2018" name="Xenobiotica">
        <title>In vitro studies with two human organic anion transporters: OAT2 and OAT7.</title>
        <authorList>
            <person name="Mathialagan S."/>
            <person name="Costales C."/>
            <person name="Tylaska L."/>
            <person name="Kimoto E."/>
            <person name="Vildhede A."/>
            <person name="Johnson J."/>
            <person name="Johnson N."/>
            <person name="Sarashina T."/>
            <person name="Hashizume K."/>
            <person name="Isringhausen C.D."/>
            <person name="Vermeer L.M.M."/>
            <person name="Wolff A.R."/>
            <person name="Rodrigues A.D."/>
        </authorList>
    </citation>
    <scope>FUNCTION</scope>
    <scope>TRANSPORTER ACTIVITY</scope>
    <scope>BIOPHYSICOCHEMICAL PROPERTIES</scope>
    <scope>CAUTION</scope>
    <scope>MISCELLANEOUS</scope>
</reference>
<dbReference type="EMBL" id="AF097518">
    <property type="protein sequence ID" value="AAD37091.1"/>
    <property type="molecule type" value="mRNA"/>
</dbReference>
<dbReference type="EMBL" id="AF210455">
    <property type="protein sequence ID" value="AAG43523.1"/>
    <property type="molecule type" value="mRNA"/>
</dbReference>
<dbReference type="EMBL" id="AY050498">
    <property type="protein sequence ID" value="AAL12496.1"/>
    <property type="molecule type" value="mRNA"/>
</dbReference>
<dbReference type="EMBL" id="AK290796">
    <property type="protein sequence ID" value="BAF83485.1"/>
    <property type="molecule type" value="mRNA"/>
</dbReference>
<dbReference type="EMBL" id="AK290806">
    <property type="protein sequence ID" value="BAF83495.1"/>
    <property type="molecule type" value="mRNA"/>
</dbReference>
<dbReference type="EMBL" id="EU562669">
    <property type="protein sequence ID" value="ACB21045.1"/>
    <property type="molecule type" value="Genomic_DNA"/>
</dbReference>
<dbReference type="EMBL" id="AL583834">
    <property type="status" value="NOT_ANNOTATED_CDS"/>
    <property type="molecule type" value="Genomic_DNA"/>
</dbReference>
<dbReference type="EMBL" id="CH471081">
    <property type="protein sequence ID" value="EAX04172.1"/>
    <property type="molecule type" value="Genomic_DNA"/>
</dbReference>
<dbReference type="EMBL" id="CH471081">
    <property type="protein sequence ID" value="EAX04175.1"/>
    <property type="molecule type" value="Genomic_DNA"/>
</dbReference>
<dbReference type="EMBL" id="BC033805">
    <property type="protein sequence ID" value="AAH33805.1"/>
    <property type="molecule type" value="mRNA"/>
</dbReference>
<dbReference type="CCDS" id="CCDS4892.1">
    <molecule id="Q9Y694-2"/>
</dbReference>
<dbReference type="CCDS" id="CCDS4893.2">
    <molecule id="Q9Y694-1"/>
</dbReference>
<dbReference type="RefSeq" id="NP_006663.2">
    <molecule id="Q9Y694-2"/>
    <property type="nucleotide sequence ID" value="NM_006672.3"/>
</dbReference>
<dbReference type="RefSeq" id="NP_696961.2">
    <molecule id="Q9Y694-1"/>
    <property type="nucleotide sequence ID" value="NM_153320.2"/>
</dbReference>
<dbReference type="SMR" id="Q9Y694"/>
<dbReference type="FunCoup" id="Q9Y694">
    <property type="interactions" value="71"/>
</dbReference>
<dbReference type="IntAct" id="Q9Y694">
    <property type="interactions" value="2"/>
</dbReference>
<dbReference type="STRING" id="9606.ENSP00000361666"/>
<dbReference type="BindingDB" id="Q9Y694"/>
<dbReference type="ChEMBL" id="CHEMBL1955711"/>
<dbReference type="DrugBank" id="DB00437">
    <property type="generic name" value="Allopurinol"/>
</dbReference>
<dbReference type="DrugBank" id="DB00345">
    <property type="generic name" value="Aminohippuric acid"/>
</dbReference>
<dbReference type="DrugBank" id="DB00887">
    <property type="generic name" value="Bumetanide"/>
</dbReference>
<dbReference type="DrugBank" id="DB00456">
    <property type="generic name" value="Cefalotin"/>
</dbReference>
<dbReference type="DrugBank" id="DB01326">
    <property type="generic name" value="Cefamandole"/>
</dbReference>
<dbReference type="DrugBank" id="DB00671">
    <property type="generic name" value="Cefixime"/>
</dbReference>
<dbReference type="DrugBank" id="DB01329">
    <property type="generic name" value="Cefoperazone"/>
</dbReference>
<dbReference type="DrugBank" id="DB00493">
    <property type="generic name" value="Cefotaxime"/>
</dbReference>
<dbReference type="DrugBank" id="DB02659">
    <property type="generic name" value="Cholic Acid"/>
</dbReference>
<dbReference type="DrugBank" id="DB00501">
    <property type="generic name" value="Cimetidine"/>
</dbReference>
<dbReference type="DrugBank" id="DB01211">
    <property type="generic name" value="Clarithromycin"/>
</dbReference>
<dbReference type="DrugBank" id="DB02527">
    <property type="generic name" value="Cyclic adenosine monophosphate"/>
</dbReference>
<dbReference type="DrugBank" id="DB01160">
    <property type="generic name" value="Dinoprost tromethamine"/>
</dbReference>
<dbReference type="DrugBank" id="DB00917">
    <property type="generic name" value="Dinoprostone"/>
</dbReference>
<dbReference type="DrugBank" id="DB01248">
    <property type="generic name" value="Docetaxel"/>
</dbReference>
<dbReference type="DrugBank" id="DB00584">
    <property type="generic name" value="Enalapril"/>
</dbReference>
<dbReference type="DrugBank" id="DB00544">
    <property type="generic name" value="Fluorouracil"/>
</dbReference>
<dbReference type="DrugBank" id="DB01004">
    <property type="generic name" value="Ganciclovir"/>
</dbReference>
<dbReference type="DrugBank" id="DB03553">
    <property type="generic name" value="Glutaric Acid"/>
</dbReference>
<dbReference type="DrugBank" id="DB01016">
    <property type="generic name" value="Glyburide"/>
</dbReference>
<dbReference type="DrugBank" id="DB00328">
    <property type="generic name" value="Indomethacin"/>
</dbReference>
<dbReference type="DrugBank" id="DB01009">
    <property type="generic name" value="Ketoprofen"/>
</dbReference>
<dbReference type="DrugBank" id="DB00563">
    <property type="generic name" value="Methotrexate"/>
</dbReference>
<dbReference type="DrugBank" id="DB01017">
    <property type="generic name" value="Minocycline"/>
</dbReference>
<dbReference type="DrugBank" id="DB01303">
    <property type="generic name" value="Oxtriphylline"/>
</dbReference>
<dbReference type="DrugBank" id="DB00595">
    <property type="generic name" value="Oxytetracycline"/>
</dbReference>
<dbReference type="DrugBank" id="DB00175">
    <property type="generic name" value="Pravastatin"/>
</dbReference>
<dbReference type="DrugBank" id="DB01032">
    <property type="generic name" value="Probenecid"/>
</dbReference>
<dbReference type="DrugBank" id="DB01045">
    <property type="generic name" value="Rifampin"/>
</dbReference>
<dbReference type="DrugBank" id="DB00936">
    <property type="generic name" value="Salicylic acid"/>
</dbReference>
<dbReference type="DrugBank" id="DB09327">
    <property type="generic name" value="Tegafur-uracil"/>
</dbReference>
<dbReference type="DrugBank" id="DB00624">
    <property type="generic name" value="Testosterone"/>
</dbReference>
<dbReference type="DrugBank" id="DB13943">
    <property type="generic name" value="Testosterone cypionate"/>
</dbReference>
<dbReference type="DrugBank" id="DB13944">
    <property type="generic name" value="Testosterone enanthate"/>
</dbReference>
<dbReference type="DrugBank" id="DB13946">
    <property type="generic name" value="Testosterone undecanoate"/>
</dbReference>
<dbReference type="DrugBank" id="DB00759">
    <property type="generic name" value="Tetracycline"/>
</dbReference>
<dbReference type="DrugBank" id="DB00277">
    <property type="generic name" value="Theophylline"/>
</dbReference>
<dbReference type="DrugBank" id="DB00313">
    <property type="generic name" value="Valproic acid"/>
</dbReference>
<dbReference type="DrugBank" id="DB00943">
    <property type="generic name" value="Zalcitabine"/>
</dbReference>
<dbReference type="DrugBank" id="DB00495">
    <property type="generic name" value="Zidovudine"/>
</dbReference>
<dbReference type="TCDB" id="2.A.1.19.25">
    <property type="family name" value="the major facilitator superfamily (mfs)"/>
</dbReference>
<dbReference type="GlyCosmos" id="Q9Y694">
    <property type="glycosylation" value="1 site, No reported glycans"/>
</dbReference>
<dbReference type="GlyGen" id="Q9Y694">
    <property type="glycosylation" value="2 sites, 2 N-linked glycans (2 sites)"/>
</dbReference>
<dbReference type="iPTMnet" id="Q9Y694"/>
<dbReference type="PhosphoSitePlus" id="Q9Y694"/>
<dbReference type="BioMuta" id="SLC22A7"/>
<dbReference type="DMDM" id="74753520"/>
<dbReference type="MassIVE" id="Q9Y694"/>
<dbReference type="PaxDb" id="9606-ENSP00000361666"/>
<dbReference type="PeptideAtlas" id="Q9Y694"/>
<dbReference type="ProteomicsDB" id="86628">
    <molecule id="Q9Y694-1"/>
</dbReference>
<dbReference type="ProteomicsDB" id="86629">
    <molecule id="Q9Y694-2"/>
</dbReference>
<dbReference type="ProteomicsDB" id="86630">
    <molecule id="Q9Y694-3"/>
</dbReference>
<dbReference type="ProteomicsDB" id="86631">
    <molecule id="Q9Y694-4"/>
</dbReference>
<dbReference type="Antibodypedia" id="30365">
    <property type="antibodies" value="106 antibodies from 23 providers"/>
</dbReference>
<dbReference type="DNASU" id="10864"/>
<dbReference type="Ensembl" id="ENST00000372574.7">
    <molecule id="Q9Y694-3"/>
    <property type="protein sequence ID" value="ENSP00000361655.3"/>
    <property type="gene ID" value="ENSG00000137204.15"/>
</dbReference>
<dbReference type="Ensembl" id="ENST00000372585.10">
    <molecule id="Q9Y694-1"/>
    <property type="protein sequence ID" value="ENSP00000361666.5"/>
    <property type="gene ID" value="ENSG00000137204.15"/>
</dbReference>
<dbReference type="Ensembl" id="ENST00000372589.7">
    <molecule id="Q9Y694-2"/>
    <property type="protein sequence ID" value="ENSP00000361670.3"/>
    <property type="gene ID" value="ENSG00000137204.15"/>
</dbReference>
<dbReference type="GeneID" id="10864"/>
<dbReference type="KEGG" id="hsa:10864"/>
<dbReference type="MANE-Select" id="ENST00000372585.10">
    <property type="protein sequence ID" value="ENSP00000361666.5"/>
    <property type="RefSeq nucleotide sequence ID" value="NM_153320.2"/>
    <property type="RefSeq protein sequence ID" value="NP_696961.2"/>
</dbReference>
<dbReference type="UCSC" id="uc003ous.4">
    <molecule id="Q9Y694-1"/>
    <property type="organism name" value="human"/>
</dbReference>
<dbReference type="AGR" id="HGNC:10971"/>
<dbReference type="CTD" id="10864"/>
<dbReference type="DisGeNET" id="10864"/>
<dbReference type="GeneCards" id="SLC22A7"/>
<dbReference type="HGNC" id="HGNC:10971">
    <property type="gene designation" value="SLC22A7"/>
</dbReference>
<dbReference type="HPA" id="ENSG00000137204">
    <property type="expression patterns" value="Tissue enriched (liver)"/>
</dbReference>
<dbReference type="MIM" id="604995">
    <property type="type" value="gene"/>
</dbReference>
<dbReference type="neXtProt" id="NX_Q9Y694"/>
<dbReference type="OpenTargets" id="ENSG00000137204"/>
<dbReference type="PharmGKB" id="PA35848"/>
<dbReference type="VEuPathDB" id="HostDB:ENSG00000137204"/>
<dbReference type="eggNOG" id="KOG0255">
    <property type="taxonomic scope" value="Eukaryota"/>
</dbReference>
<dbReference type="GeneTree" id="ENSGT00940000154922"/>
<dbReference type="HOGENOM" id="CLU_001265_33_3_1"/>
<dbReference type="InParanoid" id="Q9Y694"/>
<dbReference type="OMA" id="AWMVIFF"/>
<dbReference type="OrthoDB" id="2544694at2759"/>
<dbReference type="PAN-GO" id="Q9Y694">
    <property type="GO annotations" value="0 GO annotations based on evolutionary models"/>
</dbReference>
<dbReference type="PhylomeDB" id="Q9Y694"/>
<dbReference type="TreeFam" id="TF315847"/>
<dbReference type="PathwayCommons" id="Q9Y694"/>
<dbReference type="Reactome" id="R-HSA-561048">
    <property type="pathway name" value="Organic anion transport"/>
</dbReference>
<dbReference type="Reactome" id="R-HSA-9749641">
    <property type="pathway name" value="Aspirin ADME"/>
</dbReference>
<dbReference type="SABIO-RK" id="Q9Y694"/>
<dbReference type="SignaLink" id="Q9Y694"/>
<dbReference type="BioGRID-ORCS" id="10864">
    <property type="hits" value="10 hits in 1144 CRISPR screens"/>
</dbReference>
<dbReference type="ChiTaRS" id="SLC22A7">
    <property type="organism name" value="human"/>
</dbReference>
<dbReference type="GeneWiki" id="SLC22A7"/>
<dbReference type="GenomeRNAi" id="10864"/>
<dbReference type="Pharos" id="Q9Y694">
    <property type="development level" value="Tbio"/>
</dbReference>
<dbReference type="PRO" id="PR:Q9Y694"/>
<dbReference type="Proteomes" id="UP000005640">
    <property type="component" value="Chromosome 6"/>
</dbReference>
<dbReference type="RNAct" id="Q9Y694">
    <property type="molecule type" value="protein"/>
</dbReference>
<dbReference type="Bgee" id="ENSG00000137204">
    <property type="expression patterns" value="Expressed in right lobe of liver and 140 other cell types or tissues"/>
</dbReference>
<dbReference type="ExpressionAtlas" id="Q9Y694">
    <property type="expression patterns" value="baseline and differential"/>
</dbReference>
<dbReference type="GO" id="GO:0016324">
    <property type="term" value="C:apical plasma membrane"/>
    <property type="evidence" value="ECO:0000314"/>
    <property type="project" value="UniProtKB"/>
</dbReference>
<dbReference type="GO" id="GO:0009925">
    <property type="term" value="C:basal plasma membrane"/>
    <property type="evidence" value="ECO:0000314"/>
    <property type="project" value="UniProtKB"/>
</dbReference>
<dbReference type="GO" id="GO:0016323">
    <property type="term" value="C:basolateral plasma membrane"/>
    <property type="evidence" value="ECO:0000314"/>
    <property type="project" value="UniProtKB"/>
</dbReference>
<dbReference type="GO" id="GO:0005829">
    <property type="term" value="C:cytosol"/>
    <property type="evidence" value="ECO:0007669"/>
    <property type="project" value="UniProtKB-SubCell"/>
</dbReference>
<dbReference type="GO" id="GO:0016020">
    <property type="term" value="C:membrane"/>
    <property type="evidence" value="ECO:0000304"/>
    <property type="project" value="ProtInc"/>
</dbReference>
<dbReference type="GO" id="GO:0005886">
    <property type="term" value="C:plasma membrane"/>
    <property type="evidence" value="ECO:0000314"/>
    <property type="project" value="UniProtKB"/>
</dbReference>
<dbReference type="GO" id="GO:0015139">
    <property type="term" value="F:alpha-ketoglutarate transmembrane transporter activity"/>
    <property type="evidence" value="ECO:0000314"/>
    <property type="project" value="UniProtKB"/>
</dbReference>
<dbReference type="GO" id="GO:0008514">
    <property type="term" value="F:organic anion transmembrane transporter activity"/>
    <property type="evidence" value="ECO:0000314"/>
    <property type="project" value="UniProtKB"/>
</dbReference>
<dbReference type="GO" id="GO:0015132">
    <property type="term" value="F:prostaglandin transmembrane transporter activity"/>
    <property type="evidence" value="ECO:0000314"/>
    <property type="project" value="UniProtKB"/>
</dbReference>
<dbReference type="GO" id="GO:0015347">
    <property type="term" value="F:sodium-independent organic anion transmembrane transporter activity"/>
    <property type="evidence" value="ECO:0000250"/>
    <property type="project" value="UniProtKB"/>
</dbReference>
<dbReference type="GO" id="GO:0022857">
    <property type="term" value="F:transmembrane transporter activity"/>
    <property type="evidence" value="ECO:0000314"/>
    <property type="project" value="UniProtKB"/>
</dbReference>
<dbReference type="GO" id="GO:0015742">
    <property type="term" value="P:alpha-ketoglutarate transport"/>
    <property type="evidence" value="ECO:0000314"/>
    <property type="project" value="UniProtKB"/>
</dbReference>
<dbReference type="GO" id="GO:0006811">
    <property type="term" value="P:monoatomic ion transport"/>
    <property type="evidence" value="ECO:0007669"/>
    <property type="project" value="UniProtKB-KW"/>
</dbReference>
<dbReference type="GO" id="GO:0015711">
    <property type="term" value="P:organic anion transport"/>
    <property type="evidence" value="ECO:0000304"/>
    <property type="project" value="ProtInc"/>
</dbReference>
<dbReference type="GO" id="GO:0015732">
    <property type="term" value="P:prostaglandin transport"/>
    <property type="evidence" value="ECO:0000314"/>
    <property type="project" value="UniProtKB"/>
</dbReference>
<dbReference type="GO" id="GO:0006805">
    <property type="term" value="P:xenobiotic metabolic process"/>
    <property type="evidence" value="ECO:0000304"/>
    <property type="project" value="Reactome"/>
</dbReference>
<dbReference type="CDD" id="cd17447">
    <property type="entry name" value="MFS_SLC22A7_OAT2"/>
    <property type="match status" value="1"/>
</dbReference>
<dbReference type="FunFam" id="1.20.1250.20:FF:000170">
    <property type="entry name" value="Solute carrier family 22 member 7"/>
    <property type="match status" value="1"/>
</dbReference>
<dbReference type="Gene3D" id="1.20.1250.20">
    <property type="entry name" value="MFS general substrate transporter like domains"/>
    <property type="match status" value="1"/>
</dbReference>
<dbReference type="InterPro" id="IPR011701">
    <property type="entry name" value="MFS"/>
</dbReference>
<dbReference type="InterPro" id="IPR020846">
    <property type="entry name" value="MFS_dom"/>
</dbReference>
<dbReference type="InterPro" id="IPR036259">
    <property type="entry name" value="MFS_trans_sf"/>
</dbReference>
<dbReference type="InterPro" id="IPR004749">
    <property type="entry name" value="Orgcat_transp/SVOP"/>
</dbReference>
<dbReference type="NCBIfam" id="TIGR00898">
    <property type="entry name" value="2A0119"/>
    <property type="match status" value="1"/>
</dbReference>
<dbReference type="PANTHER" id="PTHR24064">
    <property type="entry name" value="SOLUTE CARRIER FAMILY 22 MEMBER"/>
    <property type="match status" value="1"/>
</dbReference>
<dbReference type="Pfam" id="PF07690">
    <property type="entry name" value="MFS_1"/>
    <property type="match status" value="1"/>
</dbReference>
<dbReference type="SUPFAM" id="SSF103473">
    <property type="entry name" value="MFS general substrate transporter"/>
    <property type="match status" value="1"/>
</dbReference>
<dbReference type="PROSITE" id="PS50850">
    <property type="entry name" value="MFS"/>
    <property type="match status" value="1"/>
</dbReference>
<keyword id="KW-0025">Alternative splicing</keyword>
<keyword id="KW-1003">Cell membrane</keyword>
<keyword id="KW-0963">Cytoplasm</keyword>
<keyword id="KW-0325">Glycoprotein</keyword>
<keyword id="KW-0406">Ion transport</keyword>
<keyword id="KW-0472">Membrane</keyword>
<keyword id="KW-1267">Proteomics identification</keyword>
<keyword id="KW-1185">Reference proteome</keyword>
<keyword id="KW-0812">Transmembrane</keyword>
<keyword id="KW-1133">Transmembrane helix</keyword>
<keyword id="KW-0813">Transport</keyword>
<proteinExistence type="evidence at protein level"/>
<protein>
    <recommendedName>
        <fullName evidence="17">Solute carrier family 22 member 7</fullName>
    </recommendedName>
    <alternativeName>
        <fullName evidence="21">Novel liver transporter</fullName>
        <shortName evidence="21">NLT</shortName>
    </alternativeName>
    <alternativeName>
        <fullName evidence="15">Organic anion transporter 2</fullName>
        <shortName evidence="15">hOAT2</shortName>
    </alternativeName>
</protein>
<organism>
    <name type="scientific">Homo sapiens</name>
    <name type="common">Human</name>
    <dbReference type="NCBI Taxonomy" id="9606"/>
    <lineage>
        <taxon>Eukaryota</taxon>
        <taxon>Metazoa</taxon>
        <taxon>Chordata</taxon>
        <taxon>Craniata</taxon>
        <taxon>Vertebrata</taxon>
        <taxon>Euteleostomi</taxon>
        <taxon>Mammalia</taxon>
        <taxon>Eutheria</taxon>
        <taxon>Euarchontoglires</taxon>
        <taxon>Primates</taxon>
        <taxon>Haplorrhini</taxon>
        <taxon>Catarrhini</taxon>
        <taxon>Hominidae</taxon>
        <taxon>Homo</taxon>
    </lineage>
</organism>
<comment type="function">
    <molecule>Isoform 2</molecule>
    <text evidence="4 7 9 10 11 13 25">Functions as a Na(+)-independent bidirectional multispecific transporter (PubMed:11327718, PubMed:18216183, PubMed:21446918, PubMed:28945155). Contributes to the renal and hepatic elimination of endogenous organic compounds from the systemic circulation into the urine and bile, respectively (PubMed:11327718, PubMed:25904762). Capable of transporting a wide range of purine and pyrimidine nucleobases, nucleosides and nucleotides, with cGMP, 2'deoxyguanosine and GMP being the preferred substrates (PubMed:11327718, PubMed:18216183, PubMed:26377792, PubMed:28945155). Functions as a pH- and chloride-independent cGMP bidirectional facilitative transporter that can regulate both intracellular and extracellular levels of cGMP and may be involved in cGMP signaling pathways (PubMed:18216183, PubMed:26377792). Mediates orotate/glutamate bidirectional exchange and most likely display a physiological role in hepatic release of glutamate into the blood (PubMed:21446918). Involved in renal secretion and possible reabsorption of creatinine (PubMed:25904762, PubMed:28945155). Able to uptake prostaglandin E2 (PGE2) and may contribute to PGE2 renal excretion (Probable). Also transports alpha-ketoglutarate and urate (PubMed:11327718, PubMed:26377792). Apart from the orotate/glutamate exchange, the counterions for the uptake of other SLC22A7/OAT2 substrates remain to be identified (PubMed:26377792).</text>
</comment>
<comment type="function">
    <molecule>Isoform 1</molecule>
    <text evidence="7 12">Non functional transporter.</text>
</comment>
<comment type="function">
    <molecule>Isoform 3</molecule>
    <text evidence="5">Involved in the uptake of prostaglandin F2-alpha (PGF2-alpha).</text>
</comment>
<comment type="catalytic activity">
    <molecule>Isoform 2</molecule>
    <reaction evidence="9">
        <text>orotate(out) + L-glutamate(in) = orotate(in) + L-glutamate(out)</text>
        <dbReference type="Rhea" id="RHEA:72043"/>
        <dbReference type="ChEBI" id="CHEBI:29985"/>
        <dbReference type="ChEBI" id="CHEBI:30839"/>
    </reaction>
</comment>
<comment type="catalytic activity">
    <molecule>Isoform 2</molecule>
    <reaction evidence="7 10 11 13">
        <text>3',5'-cyclic GMP(in) = 3',5'-cyclic GMP(out)</text>
        <dbReference type="Rhea" id="RHEA:76207"/>
        <dbReference type="ChEBI" id="CHEBI:57746"/>
    </reaction>
</comment>
<comment type="catalytic activity">
    <molecule>Isoform 2</molecule>
    <reaction evidence="7">
        <text>GMP(in) = GMP(out)</text>
        <dbReference type="Rhea" id="RHEA:76211"/>
        <dbReference type="ChEBI" id="CHEBI:58115"/>
    </reaction>
</comment>
<comment type="catalytic activity">
    <molecule>Isoform 2</molecule>
    <reaction evidence="7">
        <text>2'-deoxyguanosine(in) = 2'-deoxyguanosine(out)</text>
        <dbReference type="Rhea" id="RHEA:76215"/>
        <dbReference type="ChEBI" id="CHEBI:17172"/>
    </reaction>
</comment>
<comment type="catalytic activity">
    <molecule>Isoform 2</molecule>
    <reaction evidence="7">
        <text>GDP(in) = GDP(out)</text>
        <dbReference type="Rhea" id="RHEA:76219"/>
        <dbReference type="ChEBI" id="CHEBI:58189"/>
    </reaction>
</comment>
<comment type="catalytic activity">
    <molecule>Isoform 2</molecule>
    <reaction evidence="7">
        <text>guanosine(in) = guanosine(out)</text>
        <dbReference type="Rhea" id="RHEA:75371"/>
        <dbReference type="ChEBI" id="CHEBI:16750"/>
    </reaction>
</comment>
<comment type="catalytic activity">
    <molecule>Isoform 2</molecule>
    <reaction evidence="7">
        <text>GTP(in) = GTP(out)</text>
        <dbReference type="Rhea" id="RHEA:75787"/>
        <dbReference type="ChEBI" id="CHEBI:37565"/>
    </reaction>
</comment>
<comment type="catalytic activity">
    <molecule>Isoform 2</molecule>
    <reaction evidence="4">
        <text>3',5'-cyclic AMP(in) = 3',5'-cyclic AMP(out)</text>
        <dbReference type="Rhea" id="RHEA:76223"/>
        <dbReference type="ChEBI" id="CHEBI:58165"/>
    </reaction>
</comment>
<comment type="catalytic activity">
    <molecule>Isoform 2</molecule>
    <reaction evidence="10 13">
        <text>creatinine(in) = creatinine(out)</text>
        <dbReference type="Rhea" id="RHEA:74539"/>
        <dbReference type="ChEBI" id="CHEBI:16737"/>
    </reaction>
</comment>
<comment type="catalytic activity">
    <molecule>Isoform 2</molecule>
    <reaction evidence="25">
        <text>prostaglandin E2(out) = prostaglandin E2(in)</text>
        <dbReference type="Rhea" id="RHEA:50984"/>
        <dbReference type="ChEBI" id="CHEBI:606564"/>
    </reaction>
</comment>
<comment type="catalytic activity">
    <molecule>Isoform 2</molecule>
    <reaction evidence="4">
        <text>2-oxoglutarate(in) = 2-oxoglutarate(out)</text>
        <dbReference type="Rhea" id="RHEA:76231"/>
        <dbReference type="ChEBI" id="CHEBI:16810"/>
    </reaction>
</comment>
<comment type="catalytic activity">
    <reaction evidence="1">
        <text>glutarate(in) = glutarate(out)</text>
        <dbReference type="Rhea" id="RHEA:76251"/>
        <dbReference type="ChEBI" id="CHEBI:30921"/>
    </reaction>
</comment>
<comment type="catalytic activity">
    <molecule>Isoform 2</molecule>
    <reaction evidence="11">
        <text>urate(out) = urate(in)</text>
        <dbReference type="Rhea" id="RHEA:60368"/>
        <dbReference type="ChEBI" id="CHEBI:17775"/>
    </reaction>
</comment>
<comment type="catalytic activity">
    <molecule>Isoform 2</molecule>
    <reaction evidence="26">
        <text>estrone 3-sulfate(out) = estrone 3-sulfate(in)</text>
        <dbReference type="Rhea" id="RHEA:71835"/>
        <dbReference type="ChEBI" id="CHEBI:60050"/>
    </reaction>
</comment>
<comment type="catalytic activity">
    <molecule>Isoform 3</molecule>
    <reaction evidence="5">
        <text>prostaglandin F2alpha(out) = prostaglandin F2alpha(in)</text>
        <dbReference type="Rhea" id="RHEA:50988"/>
        <dbReference type="ChEBI" id="CHEBI:57404"/>
    </reaction>
</comment>
<comment type="biophysicochemical properties">
    <molecule>Isoform 2</molecule>
    <kinetics>
        <KM evidence="7">88 uM for cGMP</KM>
        <KM evidence="7">128 uM for 2'deoxyguanosine</KM>
        <KM evidence="10">795 uM for creatinine</KM>
        <KM evidence="13">149 uM for estrone 3-sulfate</KM>
        <KM evidence="25">0.713 uM for prostaglandin E2</KM>
        <Vmax evidence="10">24987.0 pmol/min/mg enzyme for creatinine transport</Vmax>
        <Vmax evidence="13">418.0 pmol/min/mg enzyme for estrone 3-sulfate transport</Vmax>
    </kinetics>
</comment>
<comment type="subcellular location">
    <molecule>Isoform 2</molecule>
    <subcellularLocation>
        <location evidence="5 10">Basolateral cell membrane</location>
        <topology evidence="23">Multi-pass membrane protein</topology>
    </subcellularLocation>
    <subcellularLocation>
        <location evidence="10">Apical cell membrane</location>
        <topology evidence="23">Multi-pass membrane protein</topology>
    </subcellularLocation>
    <subcellularLocation>
        <location evidence="7">Cell membrane</location>
        <topology evidence="23">Multi-pass membrane protein</topology>
    </subcellularLocation>
    <text evidence="5 10">Localized to the basolateral side of the proximal tubules (PubMed:12023506, PubMed:25904762). Apical side of the renal tubule (PubMed:25904762).</text>
</comment>
<comment type="subcellular location">
    <molecule>Isoform 1</molecule>
    <subcellularLocation>
        <location evidence="7">Cytoplasm</location>
        <location evidence="7">Cytosol</location>
    </subcellularLocation>
</comment>
<comment type="alternative products">
    <event type="alternative splicing"/>
    <isoform>
        <id>Q9Y694-1</id>
        <name>1</name>
        <name evidence="18">OAT2-548aa</name>
        <name evidence="19 20">OAT2-546aa OAT2-tv2</name>
        <sequence type="displayed"/>
    </isoform>
    <isoform>
        <id>Q9Y694-2</id>
        <name>2</name>
        <name evidence="18">OAT2-546aa</name>
        <name evidence="19 20">OAT2-tv1</name>
        <sequence type="described" ref="VSP_030992"/>
    </isoform>
    <isoform>
        <id>Q9Y694-3</id>
        <name>3</name>
        <name evidence="19">OAT2-tv3</name>
        <sequence type="described" ref="VSP_030992 VSP_030994"/>
    </isoform>
    <isoform>
        <id>Q9Y694-4</id>
        <name>4</name>
        <sequence type="described" ref="VSP_030991 VSP_030993"/>
    </isoform>
</comment>
<comment type="tissue specificity">
    <text evidence="4 7 9 10">Mainly expressed in liver and kidney (PubMed:11327718, PubMed:18216183, PubMed:21446918, PubMed:25904762). In kidney, expressed in proximal tubular cells (PubMed:25904762). Also expressed in pancreas, small intestine, spinal cord, lung, brain and heart (PubMed:18216183). Expressed in fetal liver (PubMed:21446918).</text>
</comment>
<comment type="miscellaneous">
    <molecule>Isoform 2</molecule>
    <text evidence="4 13 24">Involved in the uptake of clinically used drugs such as penciclovir and aciclovir, and contributes to renal and hepatic drug elimination.</text>
</comment>
<comment type="similarity">
    <text evidence="23">Belongs to the major facilitator (TC 2.A.1) superfamily. Organic cation transporter (TC 2.A.1.19) family.</text>
</comment>
<comment type="caution">
    <molecule>Isoform 2</molecule>
    <text evidence="4 11 12 13">Was shown to transport estrone-3-sulfate (E1S) (PubMed:28945155). However, E1S transport wasn't observed by other authors (PubMed:26500550). Although shown to transport alpha-ketoglutarate, it is unlikely that it is used as counteranion in exchange for isoform 2-mediated substrate uptake (PubMed:11327718, PubMed:26377792).</text>
</comment>
<comment type="caution">
    <molecule>Isoform 1</molecule>
    <text evidence="6 7 12">Conflicting results have been published concerning SLC22A7/OAT2 isoform 1 function (PubMed:15901346). Was initially demonstrated to function as an organic anion (OA)/dicarboxylate antiporter where dicarboxylates such as fumarate or succinate act as counteranion in exchange for E1S uptake (PubMed:15901346). The same authors also showed that E1S, dehydroepiandrosterone sulfate (DHEA-S), L-ascorbate and glutarate were transported by isoform 1 (PubMed:15901346). However, other authors demonstrated a complete loss of transport activity as a result of a lack of plasma membrane localization and inability to transport cGMP, E1S or DHEA-S (PubMed:18216183, PubMed:26500550).</text>
</comment>